<dbReference type="EMBL" id="J02413">
    <property type="protein sequence ID" value="AAA46586.1"/>
    <property type="molecule type" value="Genomic_RNA"/>
</dbReference>
<dbReference type="Proteomes" id="UP000007218">
    <property type="component" value="Genome"/>
</dbReference>
<dbReference type="GO" id="GO:0030430">
    <property type="term" value="C:host cell cytoplasm"/>
    <property type="evidence" value="ECO:0007669"/>
    <property type="project" value="UniProtKB-KW"/>
</dbReference>
<dbReference type="GO" id="GO:0044219">
    <property type="term" value="C:host cell plasmodesma"/>
    <property type="evidence" value="ECO:0007669"/>
    <property type="project" value="UniProtKB-SubCell"/>
</dbReference>
<dbReference type="GO" id="GO:0044163">
    <property type="term" value="C:host cytoskeleton"/>
    <property type="evidence" value="ECO:0007669"/>
    <property type="project" value="UniProtKB-SubCell"/>
</dbReference>
<dbReference type="GO" id="GO:0003723">
    <property type="term" value="F:RNA binding"/>
    <property type="evidence" value="ECO:0007669"/>
    <property type="project" value="UniProtKB-KW"/>
</dbReference>
<dbReference type="GO" id="GO:0046740">
    <property type="term" value="P:transport of virus in host, cell to cell"/>
    <property type="evidence" value="ECO:0007669"/>
    <property type="project" value="UniProtKB-KW"/>
</dbReference>
<dbReference type="InterPro" id="IPR001022">
    <property type="entry name" value="TMV_movement"/>
</dbReference>
<dbReference type="InterPro" id="IPR028919">
    <property type="entry name" value="Viral_movement"/>
</dbReference>
<dbReference type="Pfam" id="PF01107">
    <property type="entry name" value="MP"/>
    <property type="match status" value="1"/>
</dbReference>
<dbReference type="PRINTS" id="PR00964">
    <property type="entry name" value="MOVEMENT"/>
</dbReference>
<proteinExistence type="inferred from homology"/>
<evidence type="ECO:0000250" key="1">
    <source>
        <dbReference type="UniProtKB" id="P03583"/>
    </source>
</evidence>
<evidence type="ECO:0000250" key="2">
    <source>
        <dbReference type="UniProtKB" id="P69513"/>
    </source>
</evidence>
<evidence type="ECO:0000256" key="3">
    <source>
        <dbReference type="SAM" id="MobiDB-lite"/>
    </source>
</evidence>
<evidence type="ECO:0000305" key="4"/>
<organismHost>
    <name type="scientific">Crotalaria juncea</name>
    <name type="common">Sunn hemp</name>
    <dbReference type="NCBI Taxonomy" id="3829"/>
</organismHost>
<organismHost>
    <name type="scientific">Lablab purpureus</name>
    <name type="common">Hyacinth bean</name>
    <name type="synonym">Dolichos lablab</name>
    <dbReference type="NCBI Taxonomy" id="35936"/>
</organismHost>
<organismHost>
    <name type="scientific">Mucuna</name>
    <dbReference type="NCBI Taxonomy" id="40336"/>
</organismHost>
<organismHost>
    <name type="scientific">Vigna unguiculata</name>
    <name type="common">Cowpea</name>
    <dbReference type="NCBI Taxonomy" id="3917"/>
</organismHost>
<name>MVP_SHMV</name>
<protein>
    <recommendedName>
        <fullName>Movement protein</fullName>
    </recommendedName>
    <alternativeName>
        <fullName>30 kDa protein</fullName>
    </alternativeName>
    <alternativeName>
        <fullName>Cell-to-cell transport protein</fullName>
    </alternativeName>
</protein>
<accession>P03585</accession>
<feature type="chain" id="PRO_0000144965" description="Movement protein">
    <location>
        <begin position="1"/>
        <end position="283"/>
    </location>
</feature>
<feature type="region of interest" description="Disordered" evidence="3">
    <location>
        <begin position="233"/>
        <end position="283"/>
    </location>
</feature>
<feature type="compositionally biased region" description="Acidic residues" evidence="3">
    <location>
        <begin position="270"/>
        <end position="283"/>
    </location>
</feature>
<reference key="1">
    <citation type="journal article" date="1982" name="Nucleic Acids Res.">
        <title>Nucleotide sequence of the 30K protein cistron of cowpea strain of tobacco mosaic virus.</title>
        <authorList>
            <person name="Meshi T."/>
            <person name="Ohno T."/>
            <person name="Okada Y."/>
        </authorList>
    </citation>
    <scope>NUCLEOTIDE SEQUENCE [GENOMIC RNA]</scope>
</reference>
<sequence length="283" mass="30966">MSEVSKISTLLAPEKFVKLSVSDKFKWKAPSRVCSIVQSDTISMTANGRSLFTFDVLKDVLKHAEEYTYVDVLGVVLSGQWLLPKGTPGSAEIILLDSRLKGKASVLAVFNCRAATQEFQFLISPGYSLTCADALKKPFEISCNVIDLPVKDGFTPLSVEIACLVQFSNCVITRSLTMKLKENPATRTFSAEEVDELLGSMTTLRSIEGLRKKKEPNDVVQGHLSAEYDVKRSVKRTKSENTPGKRRVNVDSVSLGLGKGKSVSAKNEDTESVFDDGILDSDS</sequence>
<organism>
    <name type="scientific">Sunn-hemp mosaic virus</name>
    <name type="common">SHMV</name>
    <name type="synonym">TMV strain cowpea</name>
    <dbReference type="NCBI Taxonomy" id="12240"/>
    <lineage>
        <taxon>Viruses</taxon>
        <taxon>Riboviria</taxon>
        <taxon>Orthornavirae</taxon>
        <taxon>Kitrinoviricota</taxon>
        <taxon>Alsuviricetes</taxon>
        <taxon>Martellivirales</taxon>
        <taxon>Virgaviridae</taxon>
        <taxon>Tobamovirus</taxon>
    </lineage>
</organism>
<gene>
    <name type="primary">MP</name>
</gene>
<keyword id="KW-1031">Host cell junction</keyword>
<keyword id="KW-1035">Host cytoplasm</keyword>
<keyword id="KW-1037">Host cytoskeleton</keyword>
<keyword id="KW-1185">Reference proteome</keyword>
<keyword id="KW-0694">RNA-binding</keyword>
<keyword id="KW-0813">Transport</keyword>
<keyword id="KW-0916">Viral movement protein</keyword>
<comment type="function">
    <text evidence="1 2">Transports viral genome to neighboring plant cells directly through plasmosdesmata, without any budding. The movement protein allows efficient cell to cell propagation, by bypassing the host cell wall barrier. Forms a ribonucleoprotein complex with viral RNA. Binds microtubules and modulates microtubule stability. Can bind double-stranded DNA.</text>
</comment>
<comment type="subcellular location">
    <subcellularLocation>
        <location evidence="2">Host cytoplasm</location>
        <location evidence="2">Host cytoskeleton</location>
    </subcellularLocation>
    <subcellularLocation>
        <location evidence="2">Host cell junction</location>
        <location evidence="2">Host plasmodesma</location>
    </subcellularLocation>
</comment>
<comment type="similarity">
    <text evidence="4">Belongs to the tobamovirus movement protein family.</text>
</comment>